<feature type="chain" id="PRO_0000283019" description="UPF0421 protein SAR1980">
    <location>
        <begin position="1"/>
        <end position="328"/>
    </location>
</feature>
<feature type="transmembrane region" description="Helical" evidence="1">
    <location>
        <begin position="19"/>
        <end position="39"/>
    </location>
</feature>
<feature type="transmembrane region" description="Helical" evidence="1">
    <location>
        <begin position="61"/>
        <end position="81"/>
    </location>
</feature>
<feature type="transmembrane region" description="Helical" evidence="1">
    <location>
        <begin position="108"/>
        <end position="128"/>
    </location>
</feature>
<feature type="transmembrane region" description="Helical" evidence="1">
    <location>
        <begin position="132"/>
        <end position="152"/>
    </location>
</feature>
<name>Y1980_STAAR</name>
<accession>Q6GFG8</accession>
<comment type="subcellular location">
    <subcellularLocation>
        <location evidence="2">Cell membrane</location>
        <topology evidence="2">Multi-pass membrane protein</topology>
    </subcellularLocation>
</comment>
<comment type="similarity">
    <text evidence="2">Belongs to the UPF0421 family.</text>
</comment>
<protein>
    <recommendedName>
        <fullName>UPF0421 protein SAR1980</fullName>
    </recommendedName>
</protein>
<proteinExistence type="inferred from homology"/>
<reference key="1">
    <citation type="journal article" date="2004" name="Proc. Natl. Acad. Sci. U.S.A.">
        <title>Complete genomes of two clinical Staphylococcus aureus strains: evidence for the rapid evolution of virulence and drug resistance.</title>
        <authorList>
            <person name="Holden M.T.G."/>
            <person name="Feil E.J."/>
            <person name="Lindsay J.A."/>
            <person name="Peacock S.J."/>
            <person name="Day N.P.J."/>
            <person name="Enright M.C."/>
            <person name="Foster T.J."/>
            <person name="Moore C.E."/>
            <person name="Hurst L."/>
            <person name="Atkin R."/>
            <person name="Barron A."/>
            <person name="Bason N."/>
            <person name="Bentley S.D."/>
            <person name="Chillingworth C."/>
            <person name="Chillingworth T."/>
            <person name="Churcher C."/>
            <person name="Clark L."/>
            <person name="Corton C."/>
            <person name="Cronin A."/>
            <person name="Doggett J."/>
            <person name="Dowd L."/>
            <person name="Feltwell T."/>
            <person name="Hance Z."/>
            <person name="Harris B."/>
            <person name="Hauser H."/>
            <person name="Holroyd S."/>
            <person name="Jagels K."/>
            <person name="James K.D."/>
            <person name="Lennard N."/>
            <person name="Line A."/>
            <person name="Mayes R."/>
            <person name="Moule S."/>
            <person name="Mungall K."/>
            <person name="Ormond D."/>
            <person name="Quail M.A."/>
            <person name="Rabbinowitsch E."/>
            <person name="Rutherford K.M."/>
            <person name="Sanders M."/>
            <person name="Sharp S."/>
            <person name="Simmonds M."/>
            <person name="Stevens K."/>
            <person name="Whitehead S."/>
            <person name="Barrell B.G."/>
            <person name="Spratt B.G."/>
            <person name="Parkhill J."/>
        </authorList>
    </citation>
    <scope>NUCLEOTIDE SEQUENCE [LARGE SCALE GENOMIC DNA]</scope>
    <source>
        <strain>MRSA252</strain>
    </source>
</reference>
<evidence type="ECO:0000255" key="1"/>
<evidence type="ECO:0000305" key="2"/>
<dbReference type="EMBL" id="BX571856">
    <property type="protein sequence ID" value="CAG40966.1"/>
    <property type="molecule type" value="Genomic_DNA"/>
</dbReference>
<dbReference type="RefSeq" id="WP_001014423.1">
    <property type="nucleotide sequence ID" value="NC_002952.2"/>
</dbReference>
<dbReference type="SMR" id="Q6GFG8"/>
<dbReference type="KEGG" id="sar:SAR1980"/>
<dbReference type="HOGENOM" id="CLU_067028_0_0_9"/>
<dbReference type="Proteomes" id="UP000000596">
    <property type="component" value="Chromosome"/>
</dbReference>
<dbReference type="GO" id="GO:0005886">
    <property type="term" value="C:plasma membrane"/>
    <property type="evidence" value="ECO:0007669"/>
    <property type="project" value="UniProtKB-SubCell"/>
</dbReference>
<dbReference type="InterPro" id="IPR010343">
    <property type="entry name" value="ArAE_1"/>
</dbReference>
<dbReference type="PANTHER" id="PTHR31086">
    <property type="entry name" value="ALUMINUM-ACTIVATED MALATE TRANSPORTER 10"/>
    <property type="match status" value="1"/>
</dbReference>
<dbReference type="Pfam" id="PF06081">
    <property type="entry name" value="ArAE_1"/>
    <property type="match status" value="1"/>
</dbReference>
<organism>
    <name type="scientific">Staphylococcus aureus (strain MRSA252)</name>
    <dbReference type="NCBI Taxonomy" id="282458"/>
    <lineage>
        <taxon>Bacteria</taxon>
        <taxon>Bacillati</taxon>
        <taxon>Bacillota</taxon>
        <taxon>Bacilli</taxon>
        <taxon>Bacillales</taxon>
        <taxon>Staphylococcaceae</taxon>
        <taxon>Staphylococcus</taxon>
    </lineage>
</organism>
<keyword id="KW-1003">Cell membrane</keyword>
<keyword id="KW-0472">Membrane</keyword>
<keyword id="KW-0812">Transmembrane</keyword>
<keyword id="KW-1133">Transmembrane helix</keyword>
<sequence>MNGQWYKHLIGARTIKTGIAIFLTAVFCMALDLTPIYAILTAVVTIEPTAKASLIKGYRRLPATVIGAGFAVLFTYLFGDQSPFTYALSATFTILFCTKLKLQVGTNVAVLTSLAMIPGIHDAYIFNFLSRTLTAIIGLVTSGLINFMVFPPKYYGQVEEKLSKTDALMYKLFYNRCQEIILSRLQSDKSEKAYKNIFNLNNQVETLISYQRDELSYHKKKECDWKLLNQLTKRAYTNRLFITHLSNIIYLPKNTRVNFSGDEKMALLKISSSIKDIFYDGSFKREDDSVETLRSTIKALEISGENQIKSHILYEVLMIYRLLDSRYA</sequence>
<gene>
    <name type="ordered locus">SAR1980</name>
</gene>